<sequence>MINVQAKPAAAASLAAIAIAFLAGCSSTKPVSQDTSPKPATSPAAPVTTAAMADPAADLIGRGCAQYAAQNPTGPGSVAGMAQDPVATAASNNPMLSTLTSALSGKLNPDVNLVDTLNGGEYTVFAPTNAAFDKLPAATIDQLKTDAKLLSSILTYHVIAGQASPSRIDGTHQTLQGADLTVIGARDDLMVNNAGLVCGGVHTANATVYMIDTVLMPPAQ</sequence>
<comment type="subcellular location">
    <subcellularLocation>
        <location evidence="4">Cell membrane</location>
        <topology evidence="4">Lipid-anchor</topology>
    </subcellularLocation>
    <subcellularLocation>
        <location evidence="2">Secreted</location>
        <location evidence="2">Cell wall</location>
    </subcellularLocation>
    <subcellularLocation>
        <location evidence="1">Secreted</location>
    </subcellularLocation>
</comment>
<comment type="PTM">
    <text evidence="1">O-glycosylated. Contains 0-3 mannose residues attached to residues 48-49 in various configurations; the dominant glycoform is Thr-48(Man)/Thr-49(Man2) with an unusual Man(1-&gt;3)Man linkage, but Thr48(Man3)/Thr49(Man0) through to Thr48(Man0/)Thr49(Man3) are also seen (By similarity).</text>
</comment>
<dbReference type="EMBL" id="AE000516">
    <property type="protein sequence ID" value="AAK47265.1"/>
    <property type="molecule type" value="Genomic_DNA"/>
</dbReference>
<dbReference type="PIR" id="D70923">
    <property type="entry name" value="D70923"/>
</dbReference>
<dbReference type="RefSeq" id="WP_003414630.1">
    <property type="nucleotide sequence ID" value="NZ_KK341227.1"/>
</dbReference>
<dbReference type="SMR" id="P9WNF2"/>
<dbReference type="GlyCosmos" id="P9WNF2">
    <property type="glycosylation" value="2 sites, No reported glycans"/>
</dbReference>
<dbReference type="KEGG" id="mtc:MT2940"/>
<dbReference type="PATRIC" id="fig|83331.31.peg.3176"/>
<dbReference type="HOGENOM" id="CLU_031281_3_0_11"/>
<dbReference type="Proteomes" id="UP000001020">
    <property type="component" value="Chromosome"/>
</dbReference>
<dbReference type="GO" id="GO:0031012">
    <property type="term" value="C:extracellular matrix"/>
    <property type="evidence" value="ECO:0007669"/>
    <property type="project" value="TreeGrafter"/>
</dbReference>
<dbReference type="GO" id="GO:0005615">
    <property type="term" value="C:extracellular space"/>
    <property type="evidence" value="ECO:0007669"/>
    <property type="project" value="TreeGrafter"/>
</dbReference>
<dbReference type="GO" id="GO:0005886">
    <property type="term" value="C:plasma membrane"/>
    <property type="evidence" value="ECO:0007669"/>
    <property type="project" value="UniProtKB-SubCell"/>
</dbReference>
<dbReference type="GO" id="GO:0050839">
    <property type="term" value="F:cell adhesion molecule binding"/>
    <property type="evidence" value="ECO:0007669"/>
    <property type="project" value="TreeGrafter"/>
</dbReference>
<dbReference type="GO" id="GO:0007155">
    <property type="term" value="P:cell adhesion"/>
    <property type="evidence" value="ECO:0007669"/>
    <property type="project" value="TreeGrafter"/>
</dbReference>
<dbReference type="GO" id="GO:0030198">
    <property type="term" value="P:extracellular matrix organization"/>
    <property type="evidence" value="ECO:0007669"/>
    <property type="project" value="TreeGrafter"/>
</dbReference>
<dbReference type="FunFam" id="2.30.180.10:FF:000019">
    <property type="entry name" value="Cell surface lipoprotein"/>
    <property type="match status" value="1"/>
</dbReference>
<dbReference type="Gene3D" id="2.30.180.10">
    <property type="entry name" value="FAS1 domain"/>
    <property type="match status" value="1"/>
</dbReference>
<dbReference type="InterPro" id="IPR050904">
    <property type="entry name" value="Adhesion/Biosynth-related"/>
</dbReference>
<dbReference type="InterPro" id="IPR036378">
    <property type="entry name" value="FAS1_dom_sf"/>
</dbReference>
<dbReference type="InterPro" id="IPR000782">
    <property type="entry name" value="FAS1_domain"/>
</dbReference>
<dbReference type="PANTHER" id="PTHR10900:SF77">
    <property type="entry name" value="FI19380P1"/>
    <property type="match status" value="1"/>
</dbReference>
<dbReference type="PANTHER" id="PTHR10900">
    <property type="entry name" value="PERIOSTIN-RELATED"/>
    <property type="match status" value="1"/>
</dbReference>
<dbReference type="Pfam" id="PF02469">
    <property type="entry name" value="Fasciclin"/>
    <property type="match status" value="1"/>
</dbReference>
<dbReference type="SMART" id="SM00554">
    <property type="entry name" value="FAS1"/>
    <property type="match status" value="1"/>
</dbReference>
<dbReference type="SUPFAM" id="SSF82153">
    <property type="entry name" value="FAS1 domain"/>
    <property type="match status" value="1"/>
</dbReference>
<dbReference type="PROSITE" id="PS50213">
    <property type="entry name" value="FAS1"/>
    <property type="match status" value="1"/>
</dbReference>
<dbReference type="PROSITE" id="PS51257">
    <property type="entry name" value="PROKAR_LIPOPROTEIN"/>
    <property type="match status" value="1"/>
</dbReference>
<proteinExistence type="inferred from homology"/>
<accession>P9WNF2</accession>
<accession>L0TAW5</accession>
<accession>P0A670</accession>
<accession>P71493</accession>
<accession>Q10790</accession>
<keyword id="KW-1003">Cell membrane</keyword>
<keyword id="KW-0134">Cell wall</keyword>
<keyword id="KW-0325">Glycoprotein</keyword>
<keyword id="KW-0449">Lipoprotein</keyword>
<keyword id="KW-0472">Membrane</keyword>
<keyword id="KW-0564">Palmitate</keyword>
<keyword id="KW-1185">Reference proteome</keyword>
<keyword id="KW-0964">Secreted</keyword>
<keyword id="KW-0732">Signal</keyword>
<reference key="1">
    <citation type="journal article" date="2002" name="J. Bacteriol.">
        <title>Whole-genome comparison of Mycobacterium tuberculosis clinical and laboratory strains.</title>
        <authorList>
            <person name="Fleischmann R.D."/>
            <person name="Alland D."/>
            <person name="Eisen J.A."/>
            <person name="Carpenter L."/>
            <person name="White O."/>
            <person name="Peterson J.D."/>
            <person name="DeBoy R.T."/>
            <person name="Dodson R.J."/>
            <person name="Gwinn M.L."/>
            <person name="Haft D.H."/>
            <person name="Hickey E.K."/>
            <person name="Kolonay J.F."/>
            <person name="Nelson W.C."/>
            <person name="Umayam L.A."/>
            <person name="Ermolaeva M.D."/>
            <person name="Salzberg S.L."/>
            <person name="Delcher A."/>
            <person name="Utterback T.R."/>
            <person name="Weidman J.F."/>
            <person name="Khouri H.M."/>
            <person name="Gill J."/>
            <person name="Mikula A."/>
            <person name="Bishai W."/>
            <person name="Jacobs W.R. Jr."/>
            <person name="Venter J.C."/>
            <person name="Fraser C.M."/>
        </authorList>
    </citation>
    <scope>NUCLEOTIDE SEQUENCE [LARGE SCALE GENOMIC DNA]</scope>
    <source>
        <strain>CDC 1551 / Oshkosh</strain>
    </source>
</reference>
<gene>
    <name type="primary">mpt83</name>
    <name type="ordered locus">MT2940</name>
</gene>
<organism>
    <name type="scientific">Mycobacterium tuberculosis (strain CDC 1551 / Oshkosh)</name>
    <dbReference type="NCBI Taxonomy" id="83331"/>
    <lineage>
        <taxon>Bacteria</taxon>
        <taxon>Bacillati</taxon>
        <taxon>Actinomycetota</taxon>
        <taxon>Actinomycetes</taxon>
        <taxon>Mycobacteriales</taxon>
        <taxon>Mycobacteriaceae</taxon>
        <taxon>Mycobacterium</taxon>
        <taxon>Mycobacterium tuberculosis complex</taxon>
    </lineage>
</organism>
<evidence type="ECO:0000250" key="1">
    <source>
        <dbReference type="UniProtKB" id="P0CAX7"/>
    </source>
</evidence>
<evidence type="ECO:0000250" key="2">
    <source>
        <dbReference type="UniProtKB" id="P9WNF3"/>
    </source>
</evidence>
<evidence type="ECO:0000255" key="3">
    <source>
        <dbReference type="PROSITE-ProRule" id="PRU00082"/>
    </source>
</evidence>
<evidence type="ECO:0000255" key="4">
    <source>
        <dbReference type="PROSITE-ProRule" id="PRU00303"/>
    </source>
</evidence>
<name>MP83_MYCTO</name>
<protein>
    <recommendedName>
        <fullName>Cell surface glycolipoprotein MPT83</fullName>
    </recommendedName>
    <alternativeName>
        <fullName>Lipoprotein p23</fullName>
    </alternativeName>
</protein>
<feature type="signal peptide" evidence="4">
    <location>
        <begin position="1"/>
        <end position="24"/>
    </location>
</feature>
<feature type="chain" id="PRO_0000427137" description="Cell surface glycolipoprotein MPT83">
    <location>
        <begin position="25"/>
        <end position="220"/>
    </location>
</feature>
<feature type="domain" description="FAS1" evidence="3">
    <location>
        <begin position="83"/>
        <end position="215"/>
    </location>
</feature>
<feature type="lipid moiety-binding region" description="N-palmitoyl cysteine" evidence="4">
    <location>
        <position position="25"/>
    </location>
</feature>
<feature type="lipid moiety-binding region" description="S-diacylglycerol cysteine" evidence="4">
    <location>
        <position position="25"/>
    </location>
</feature>
<feature type="glycosylation site" description="O-linked (Man...) threonine" evidence="1">
    <location>
        <position position="48"/>
    </location>
</feature>
<feature type="glycosylation site" description="O-linked (Man...) threonine" evidence="1">
    <location>
        <position position="49"/>
    </location>
</feature>